<protein>
    <recommendedName>
        <fullName evidence="1">Imidazole glycerol phosphate synthase subunit HisF</fullName>
        <ecNumber evidence="1">4.3.2.10</ecNumber>
    </recommendedName>
    <alternativeName>
        <fullName evidence="1">IGP synthase cyclase subunit</fullName>
    </alternativeName>
    <alternativeName>
        <fullName evidence="1">IGP synthase subunit HisF</fullName>
    </alternativeName>
    <alternativeName>
        <fullName evidence="1">ImGP synthase subunit HisF</fullName>
        <shortName evidence="1">IGPS subunit HisF</shortName>
    </alternativeName>
</protein>
<accession>A1SL56</accession>
<sequence length="258" mass="26864">MTLAVRVIPCLDVDAGRVVKGINFKELRDAGDPVELARTYDAEGADELTFLDISASFEGRATTMEIVSRTAEEVFIPLTVGGGVSSVADVDRLLRAGADKVAVNTAAINRPELVAEIADRFGNQVLVLSVDARRVDARRAPGTASGFEVTTHGGRKSAGLDAVEWAVRAADLGAGEILLNAMDADGTQDGFDLELIRAVRREVTVPVIASGGAGAVEHFPPAVEAGADAVLAATVFHFGTLRIADVKASLAGAGYPVR</sequence>
<comment type="function">
    <text evidence="1">IGPS catalyzes the conversion of PRFAR and glutamine to IGP, AICAR and glutamate. The HisF subunit catalyzes the cyclization activity that produces IGP and AICAR from PRFAR using the ammonia provided by the HisH subunit.</text>
</comment>
<comment type="catalytic activity">
    <reaction evidence="1">
        <text>5-[(5-phospho-1-deoxy-D-ribulos-1-ylimino)methylamino]-1-(5-phospho-beta-D-ribosyl)imidazole-4-carboxamide + L-glutamine = D-erythro-1-(imidazol-4-yl)glycerol 3-phosphate + 5-amino-1-(5-phospho-beta-D-ribosyl)imidazole-4-carboxamide + L-glutamate + H(+)</text>
        <dbReference type="Rhea" id="RHEA:24793"/>
        <dbReference type="ChEBI" id="CHEBI:15378"/>
        <dbReference type="ChEBI" id="CHEBI:29985"/>
        <dbReference type="ChEBI" id="CHEBI:58278"/>
        <dbReference type="ChEBI" id="CHEBI:58359"/>
        <dbReference type="ChEBI" id="CHEBI:58475"/>
        <dbReference type="ChEBI" id="CHEBI:58525"/>
        <dbReference type="EC" id="4.3.2.10"/>
    </reaction>
</comment>
<comment type="pathway">
    <text evidence="1">Amino-acid biosynthesis; L-histidine biosynthesis; L-histidine from 5-phospho-alpha-D-ribose 1-diphosphate: step 5/9.</text>
</comment>
<comment type="subunit">
    <text evidence="1">Heterodimer of HisH and HisF.</text>
</comment>
<comment type="subcellular location">
    <subcellularLocation>
        <location evidence="1">Cytoplasm</location>
    </subcellularLocation>
</comment>
<comment type="similarity">
    <text evidence="1">Belongs to the HisA/HisF family.</text>
</comment>
<evidence type="ECO:0000255" key="1">
    <source>
        <dbReference type="HAMAP-Rule" id="MF_01013"/>
    </source>
</evidence>
<organism>
    <name type="scientific">Nocardioides sp. (strain ATCC BAA-499 / JS614)</name>
    <dbReference type="NCBI Taxonomy" id="196162"/>
    <lineage>
        <taxon>Bacteria</taxon>
        <taxon>Bacillati</taxon>
        <taxon>Actinomycetota</taxon>
        <taxon>Actinomycetes</taxon>
        <taxon>Propionibacteriales</taxon>
        <taxon>Nocardioidaceae</taxon>
        <taxon>Nocardioides</taxon>
    </lineage>
</organism>
<dbReference type="EC" id="4.3.2.10" evidence="1"/>
<dbReference type="EMBL" id="CP000509">
    <property type="protein sequence ID" value="ABL82541.1"/>
    <property type="molecule type" value="Genomic_DNA"/>
</dbReference>
<dbReference type="RefSeq" id="WP_011756475.1">
    <property type="nucleotide sequence ID" value="NC_008699.1"/>
</dbReference>
<dbReference type="SMR" id="A1SL56"/>
<dbReference type="STRING" id="196162.Noca_3039"/>
<dbReference type="KEGG" id="nca:Noca_3039"/>
<dbReference type="eggNOG" id="COG0107">
    <property type="taxonomic scope" value="Bacteria"/>
</dbReference>
<dbReference type="HOGENOM" id="CLU_048577_4_0_11"/>
<dbReference type="OrthoDB" id="9781903at2"/>
<dbReference type="UniPathway" id="UPA00031">
    <property type="reaction ID" value="UER00010"/>
</dbReference>
<dbReference type="Proteomes" id="UP000000640">
    <property type="component" value="Chromosome"/>
</dbReference>
<dbReference type="GO" id="GO:0005737">
    <property type="term" value="C:cytoplasm"/>
    <property type="evidence" value="ECO:0007669"/>
    <property type="project" value="UniProtKB-SubCell"/>
</dbReference>
<dbReference type="GO" id="GO:0000107">
    <property type="term" value="F:imidazoleglycerol-phosphate synthase activity"/>
    <property type="evidence" value="ECO:0007669"/>
    <property type="project" value="UniProtKB-UniRule"/>
</dbReference>
<dbReference type="GO" id="GO:0016829">
    <property type="term" value="F:lyase activity"/>
    <property type="evidence" value="ECO:0007669"/>
    <property type="project" value="UniProtKB-KW"/>
</dbReference>
<dbReference type="GO" id="GO:0000105">
    <property type="term" value="P:L-histidine biosynthetic process"/>
    <property type="evidence" value="ECO:0007669"/>
    <property type="project" value="UniProtKB-UniRule"/>
</dbReference>
<dbReference type="CDD" id="cd04731">
    <property type="entry name" value="HisF"/>
    <property type="match status" value="1"/>
</dbReference>
<dbReference type="FunFam" id="3.20.20.70:FF:000006">
    <property type="entry name" value="Imidazole glycerol phosphate synthase subunit HisF"/>
    <property type="match status" value="1"/>
</dbReference>
<dbReference type="Gene3D" id="3.20.20.70">
    <property type="entry name" value="Aldolase class I"/>
    <property type="match status" value="1"/>
</dbReference>
<dbReference type="HAMAP" id="MF_01013">
    <property type="entry name" value="HisF"/>
    <property type="match status" value="1"/>
</dbReference>
<dbReference type="InterPro" id="IPR013785">
    <property type="entry name" value="Aldolase_TIM"/>
</dbReference>
<dbReference type="InterPro" id="IPR006062">
    <property type="entry name" value="His_biosynth"/>
</dbReference>
<dbReference type="InterPro" id="IPR004651">
    <property type="entry name" value="HisF"/>
</dbReference>
<dbReference type="InterPro" id="IPR050064">
    <property type="entry name" value="IGPS_HisA/HisF"/>
</dbReference>
<dbReference type="InterPro" id="IPR011060">
    <property type="entry name" value="RibuloseP-bd_barrel"/>
</dbReference>
<dbReference type="NCBIfam" id="TIGR00735">
    <property type="entry name" value="hisF"/>
    <property type="match status" value="1"/>
</dbReference>
<dbReference type="PANTHER" id="PTHR21235:SF2">
    <property type="entry name" value="IMIDAZOLE GLYCEROL PHOSPHATE SYNTHASE HISHF"/>
    <property type="match status" value="1"/>
</dbReference>
<dbReference type="PANTHER" id="PTHR21235">
    <property type="entry name" value="IMIDAZOLE GLYCEROL PHOSPHATE SYNTHASE SUBUNIT HISF/H IGP SYNTHASE SUBUNIT HISF/H"/>
    <property type="match status" value="1"/>
</dbReference>
<dbReference type="Pfam" id="PF00977">
    <property type="entry name" value="His_biosynth"/>
    <property type="match status" value="1"/>
</dbReference>
<dbReference type="SUPFAM" id="SSF51366">
    <property type="entry name" value="Ribulose-phoshate binding barrel"/>
    <property type="match status" value="1"/>
</dbReference>
<reference key="1">
    <citation type="submission" date="2006-12" db="EMBL/GenBank/DDBJ databases">
        <title>Complete sequence of chromosome 1 of Nocardioides sp. JS614.</title>
        <authorList>
            <person name="Copeland A."/>
            <person name="Lucas S."/>
            <person name="Lapidus A."/>
            <person name="Barry K."/>
            <person name="Detter J.C."/>
            <person name="Glavina del Rio T."/>
            <person name="Hammon N."/>
            <person name="Israni S."/>
            <person name="Dalin E."/>
            <person name="Tice H."/>
            <person name="Pitluck S."/>
            <person name="Thompson L.S."/>
            <person name="Brettin T."/>
            <person name="Bruce D."/>
            <person name="Han C."/>
            <person name="Tapia R."/>
            <person name="Schmutz J."/>
            <person name="Larimer F."/>
            <person name="Land M."/>
            <person name="Hauser L."/>
            <person name="Kyrpides N."/>
            <person name="Kim E."/>
            <person name="Mattes T."/>
            <person name="Gossett J."/>
            <person name="Richardson P."/>
        </authorList>
    </citation>
    <scope>NUCLEOTIDE SEQUENCE [LARGE SCALE GENOMIC DNA]</scope>
    <source>
        <strain>ATCC BAA-499 / JS614</strain>
    </source>
</reference>
<feature type="chain" id="PRO_1000063105" description="Imidazole glycerol phosphate synthase subunit HisF">
    <location>
        <begin position="1"/>
        <end position="258"/>
    </location>
</feature>
<feature type="active site" evidence="1">
    <location>
        <position position="12"/>
    </location>
</feature>
<feature type="active site" evidence="1">
    <location>
        <position position="131"/>
    </location>
</feature>
<name>HIS6_NOCSJ</name>
<proteinExistence type="inferred from homology"/>
<gene>
    <name evidence="1" type="primary">hisF</name>
    <name type="ordered locus">Noca_3039</name>
</gene>
<keyword id="KW-0028">Amino-acid biosynthesis</keyword>
<keyword id="KW-0963">Cytoplasm</keyword>
<keyword id="KW-0368">Histidine biosynthesis</keyword>
<keyword id="KW-0456">Lyase</keyword>
<keyword id="KW-1185">Reference proteome</keyword>